<keyword id="KW-0963">Cytoplasm</keyword>
<keyword id="KW-0328">Glycosyltransferase</keyword>
<keyword id="KW-0660">Purine salvage</keyword>
<keyword id="KW-0808">Transferase</keyword>
<evidence type="ECO:0000255" key="1">
    <source>
        <dbReference type="HAMAP-Rule" id="MF_00004"/>
    </source>
</evidence>
<organism>
    <name type="scientific">Pseudomonas entomophila (strain L48)</name>
    <dbReference type="NCBI Taxonomy" id="384676"/>
    <lineage>
        <taxon>Bacteria</taxon>
        <taxon>Pseudomonadati</taxon>
        <taxon>Pseudomonadota</taxon>
        <taxon>Gammaproteobacteria</taxon>
        <taxon>Pseudomonadales</taxon>
        <taxon>Pseudomonadaceae</taxon>
        <taxon>Pseudomonas</taxon>
    </lineage>
</organism>
<protein>
    <recommendedName>
        <fullName evidence="1">Adenine phosphoribosyltransferase</fullName>
        <shortName evidence="1">APRT</shortName>
        <ecNumber evidence="1">2.4.2.7</ecNumber>
    </recommendedName>
</protein>
<proteinExistence type="inferred from homology"/>
<sequence length="182" mass="20074">MYSDTFDLKALIRPVVDFPKPGVIFRDITPLFQSPRGLRYVADQFIERYVEADFTHIGAMDARGFLIGSIIAHQLNKPLILFRKQGKLPADVLSEGYQTEYGEAFLEVHADSLCDGDSVLIFDDLIATGGTLLAAANLVRRTGAKVFEAAAIIDLPELEGSRRLQAAGVPTFCLTEFSLSEY</sequence>
<accession>Q1ICH9</accession>
<name>APT_PSEE4</name>
<reference key="1">
    <citation type="journal article" date="2006" name="Nat. Biotechnol.">
        <title>Complete genome sequence of the entomopathogenic and metabolically versatile soil bacterium Pseudomonas entomophila.</title>
        <authorList>
            <person name="Vodovar N."/>
            <person name="Vallenet D."/>
            <person name="Cruveiller S."/>
            <person name="Rouy Z."/>
            <person name="Barbe V."/>
            <person name="Acosta C."/>
            <person name="Cattolico L."/>
            <person name="Jubin C."/>
            <person name="Lajus A."/>
            <person name="Segurens B."/>
            <person name="Vacherie B."/>
            <person name="Wincker P."/>
            <person name="Weissenbach J."/>
            <person name="Lemaitre B."/>
            <person name="Medigue C."/>
            <person name="Boccard F."/>
        </authorList>
    </citation>
    <scope>NUCLEOTIDE SEQUENCE [LARGE SCALE GENOMIC DNA]</scope>
    <source>
        <strain>L48</strain>
    </source>
</reference>
<feature type="chain" id="PRO_1000000325" description="Adenine phosphoribosyltransferase">
    <location>
        <begin position="1"/>
        <end position="182"/>
    </location>
</feature>
<gene>
    <name evidence="1" type="primary">apt</name>
    <name type="ordered locus">PSEEN1791</name>
</gene>
<comment type="function">
    <text evidence="1">Catalyzes a salvage reaction resulting in the formation of AMP, that is energically less costly than de novo synthesis.</text>
</comment>
<comment type="catalytic activity">
    <reaction evidence="1">
        <text>AMP + diphosphate = 5-phospho-alpha-D-ribose 1-diphosphate + adenine</text>
        <dbReference type="Rhea" id="RHEA:16609"/>
        <dbReference type="ChEBI" id="CHEBI:16708"/>
        <dbReference type="ChEBI" id="CHEBI:33019"/>
        <dbReference type="ChEBI" id="CHEBI:58017"/>
        <dbReference type="ChEBI" id="CHEBI:456215"/>
        <dbReference type="EC" id="2.4.2.7"/>
    </reaction>
</comment>
<comment type="pathway">
    <text evidence="1">Purine metabolism; AMP biosynthesis via salvage pathway; AMP from adenine: step 1/1.</text>
</comment>
<comment type="subunit">
    <text evidence="1">Homodimer.</text>
</comment>
<comment type="subcellular location">
    <subcellularLocation>
        <location evidence="1">Cytoplasm</location>
    </subcellularLocation>
</comment>
<comment type="similarity">
    <text evidence="1">Belongs to the purine/pyrimidine phosphoribosyltransferase family.</text>
</comment>
<dbReference type="EC" id="2.4.2.7" evidence="1"/>
<dbReference type="EMBL" id="CT573326">
    <property type="protein sequence ID" value="CAK14634.1"/>
    <property type="molecule type" value="Genomic_DNA"/>
</dbReference>
<dbReference type="RefSeq" id="WP_011533043.1">
    <property type="nucleotide sequence ID" value="NC_008027.1"/>
</dbReference>
<dbReference type="SMR" id="Q1ICH9"/>
<dbReference type="STRING" id="384676.PSEEN1791"/>
<dbReference type="GeneID" id="32805021"/>
<dbReference type="KEGG" id="pen:PSEEN1791"/>
<dbReference type="eggNOG" id="COG0503">
    <property type="taxonomic scope" value="Bacteria"/>
</dbReference>
<dbReference type="HOGENOM" id="CLU_063339_3_0_6"/>
<dbReference type="OrthoDB" id="9803963at2"/>
<dbReference type="UniPathway" id="UPA00588">
    <property type="reaction ID" value="UER00646"/>
</dbReference>
<dbReference type="Proteomes" id="UP000000658">
    <property type="component" value="Chromosome"/>
</dbReference>
<dbReference type="GO" id="GO:0005829">
    <property type="term" value="C:cytosol"/>
    <property type="evidence" value="ECO:0007669"/>
    <property type="project" value="TreeGrafter"/>
</dbReference>
<dbReference type="GO" id="GO:0003999">
    <property type="term" value="F:adenine phosphoribosyltransferase activity"/>
    <property type="evidence" value="ECO:0007669"/>
    <property type="project" value="UniProtKB-UniRule"/>
</dbReference>
<dbReference type="GO" id="GO:0006168">
    <property type="term" value="P:adenine salvage"/>
    <property type="evidence" value="ECO:0007669"/>
    <property type="project" value="InterPro"/>
</dbReference>
<dbReference type="GO" id="GO:0044209">
    <property type="term" value="P:AMP salvage"/>
    <property type="evidence" value="ECO:0007669"/>
    <property type="project" value="UniProtKB-UniRule"/>
</dbReference>
<dbReference type="GO" id="GO:0006166">
    <property type="term" value="P:purine ribonucleoside salvage"/>
    <property type="evidence" value="ECO:0007669"/>
    <property type="project" value="UniProtKB-KW"/>
</dbReference>
<dbReference type="CDD" id="cd06223">
    <property type="entry name" value="PRTases_typeI"/>
    <property type="match status" value="1"/>
</dbReference>
<dbReference type="FunFam" id="3.40.50.2020:FF:000021">
    <property type="entry name" value="Adenine phosphoribosyltransferase"/>
    <property type="match status" value="1"/>
</dbReference>
<dbReference type="Gene3D" id="3.40.50.2020">
    <property type="match status" value="1"/>
</dbReference>
<dbReference type="HAMAP" id="MF_00004">
    <property type="entry name" value="Aden_phosphoribosyltr"/>
    <property type="match status" value="1"/>
</dbReference>
<dbReference type="InterPro" id="IPR005764">
    <property type="entry name" value="Ade_phspho_trans"/>
</dbReference>
<dbReference type="InterPro" id="IPR050120">
    <property type="entry name" value="Adenine_PRTase"/>
</dbReference>
<dbReference type="InterPro" id="IPR000836">
    <property type="entry name" value="PRibTrfase_dom"/>
</dbReference>
<dbReference type="InterPro" id="IPR029057">
    <property type="entry name" value="PRTase-like"/>
</dbReference>
<dbReference type="NCBIfam" id="TIGR01090">
    <property type="entry name" value="apt"/>
    <property type="match status" value="1"/>
</dbReference>
<dbReference type="NCBIfam" id="NF002634">
    <property type="entry name" value="PRK02304.1-3"/>
    <property type="match status" value="1"/>
</dbReference>
<dbReference type="NCBIfam" id="NF002636">
    <property type="entry name" value="PRK02304.1-5"/>
    <property type="match status" value="1"/>
</dbReference>
<dbReference type="PANTHER" id="PTHR11776">
    <property type="entry name" value="ADENINE PHOSPHORIBOSYLTRANSFERASE"/>
    <property type="match status" value="1"/>
</dbReference>
<dbReference type="PANTHER" id="PTHR11776:SF7">
    <property type="entry name" value="PHOSPHORIBOSYLTRANSFERASE DOMAIN-CONTAINING PROTEIN"/>
    <property type="match status" value="1"/>
</dbReference>
<dbReference type="Pfam" id="PF00156">
    <property type="entry name" value="Pribosyltran"/>
    <property type="match status" value="1"/>
</dbReference>
<dbReference type="SUPFAM" id="SSF53271">
    <property type="entry name" value="PRTase-like"/>
    <property type="match status" value="1"/>
</dbReference>
<dbReference type="PROSITE" id="PS00103">
    <property type="entry name" value="PUR_PYR_PR_TRANSFER"/>
    <property type="match status" value="1"/>
</dbReference>